<feature type="propeptide" id="PRO_0000459633" evidence="4">
    <location>
        <begin position="1" status="less than"/>
        <end position="8"/>
    </location>
</feature>
<feature type="peptide" id="PRO_5000140412" description="Natriuretic peptide HsNP-a" evidence="2">
    <location>
        <begin position="9"/>
        <end position="39"/>
    </location>
</feature>
<feature type="disulfide bond" evidence="2">
    <location>
        <begin position="12"/>
        <end position="28"/>
    </location>
</feature>
<feature type="non-terminal residue">
    <location>
        <position position="1"/>
    </location>
</feature>
<proteinExistence type="evidence at transcript level"/>
<keyword id="KW-1015">Disulfide bond</keyword>
<keyword id="KW-0382">Hypotensive agent</keyword>
<keyword id="KW-0964">Secreted</keyword>
<keyword id="KW-0800">Toxin</keyword>
<keyword id="KW-0838">Vasoactive</keyword>
<keyword id="KW-0840">Vasodilator</keyword>
<sequence>SGSKTAKIGDGCFGVRLDRIGSTSGMGCGGVPKPTPGGS</sequence>
<comment type="function">
    <text evidence="1 2">Snake venom natriuretic peptide that targets both NPR1 and NPR2 (By similarity). Exhibits hypotensive and vasodepressor activities (By similarity).</text>
</comment>
<comment type="subcellular location">
    <subcellularLocation>
        <location evidence="5">Secreted</location>
    </subcellularLocation>
</comment>
<comment type="tissue specificity">
    <text evidence="5">Expressed by the venom gland.</text>
</comment>
<comment type="similarity">
    <text evidence="4">Belongs to the natriuretic peptide family.</text>
</comment>
<accession>Q3SAE6</accession>
<evidence type="ECO:0000250" key="1">
    <source>
        <dbReference type="UniProtKB" id="C6EVG7"/>
    </source>
</evidence>
<evidence type="ECO:0000250" key="2">
    <source>
        <dbReference type="UniProtKB" id="Q3SAE9"/>
    </source>
</evidence>
<evidence type="ECO:0000303" key="3">
    <source>
    </source>
</evidence>
<evidence type="ECO:0000305" key="4"/>
<evidence type="ECO:0000305" key="5">
    <source>
    </source>
</evidence>
<dbReference type="EMBL" id="DQ116734">
    <property type="protein sequence ID" value="AAZ82829.1"/>
    <property type="molecule type" value="mRNA"/>
</dbReference>
<dbReference type="GO" id="GO:0005576">
    <property type="term" value="C:extracellular region"/>
    <property type="evidence" value="ECO:0007669"/>
    <property type="project" value="UniProtKB-SubCell"/>
</dbReference>
<dbReference type="GO" id="GO:0005179">
    <property type="term" value="F:hormone activity"/>
    <property type="evidence" value="ECO:0007669"/>
    <property type="project" value="InterPro"/>
</dbReference>
<dbReference type="GO" id="GO:0090729">
    <property type="term" value="F:toxin activity"/>
    <property type="evidence" value="ECO:0007669"/>
    <property type="project" value="UniProtKB-KW"/>
</dbReference>
<dbReference type="GO" id="GO:0008217">
    <property type="term" value="P:regulation of blood pressure"/>
    <property type="evidence" value="ECO:0007669"/>
    <property type="project" value="UniProtKB-KW"/>
</dbReference>
<dbReference type="GO" id="GO:0042311">
    <property type="term" value="P:vasodilation"/>
    <property type="evidence" value="ECO:0007669"/>
    <property type="project" value="UniProtKB-KW"/>
</dbReference>
<dbReference type="InterPro" id="IPR000663">
    <property type="entry name" value="Natr_peptide"/>
</dbReference>
<dbReference type="InterPro" id="IPR030480">
    <property type="entry name" value="Natr_peptide_CS"/>
</dbReference>
<dbReference type="InterPro" id="IPR002408">
    <property type="entry name" value="Natriuretic_peptide_brain"/>
</dbReference>
<dbReference type="Pfam" id="PF00212">
    <property type="entry name" value="ANP"/>
    <property type="match status" value="1"/>
</dbReference>
<dbReference type="PRINTS" id="PR00712">
    <property type="entry name" value="BNATPEPTIDE"/>
</dbReference>
<dbReference type="PRINTS" id="PR00710">
    <property type="entry name" value="NATPEPTIDES"/>
</dbReference>
<dbReference type="SMART" id="SM00183">
    <property type="entry name" value="NAT_PEP"/>
    <property type="match status" value="1"/>
</dbReference>
<dbReference type="PROSITE" id="PS00263">
    <property type="entry name" value="NATRIURETIC_PEPTIDE"/>
    <property type="match status" value="1"/>
</dbReference>
<organism>
    <name type="scientific">Hoplocephalus stephensii</name>
    <name type="common">Stephens's banded snake</name>
    <dbReference type="NCBI Taxonomy" id="196418"/>
    <lineage>
        <taxon>Eukaryota</taxon>
        <taxon>Metazoa</taxon>
        <taxon>Chordata</taxon>
        <taxon>Craniata</taxon>
        <taxon>Vertebrata</taxon>
        <taxon>Euteleostomi</taxon>
        <taxon>Lepidosauria</taxon>
        <taxon>Squamata</taxon>
        <taxon>Bifurcata</taxon>
        <taxon>Unidentata</taxon>
        <taxon>Episquamata</taxon>
        <taxon>Toxicofera</taxon>
        <taxon>Serpentes</taxon>
        <taxon>Colubroidea</taxon>
        <taxon>Elapidae</taxon>
        <taxon>Notechinae</taxon>
        <taxon>Hoplocephalus</taxon>
    </lineage>
</organism>
<name>VNPA_HOPST</name>
<protein>
    <recommendedName>
        <fullName evidence="3">Natriuretic peptide HsNP-a</fullName>
    </recommendedName>
</protein>
<reference key="1">
    <citation type="journal article" date="2006" name="Biochimie">
        <title>Cloning and characterisation of natriuretic peptides from the venom glands of Australian elapids.</title>
        <authorList>
            <person name="St Pierre L."/>
            <person name="Flight S."/>
            <person name="Masci P.P."/>
            <person name="Hanchard K.J."/>
            <person name="Lewis R.J."/>
            <person name="Alewood P.F."/>
            <person name="de Jersey J."/>
            <person name="Lavin M.F."/>
        </authorList>
    </citation>
    <scope>NUCLEOTIDE SEQUENCE [MRNA]</scope>
    <source>
        <tissue>Venom gland</tissue>
    </source>
</reference>